<gene>
    <name type="primary">GL1</name>
</gene>
<comment type="function">
    <text evidence="1">Regulates the production of a signal that induces hair (trichome) precursor cells on leaf primordia to differentiate.</text>
</comment>
<comment type="subcellular location">
    <subcellularLocation>
        <location evidence="2">Nucleus</location>
    </subcellularLocation>
</comment>
<proteinExistence type="inferred from homology"/>
<feature type="chain" id="PRO_0000197072" description="Trichome differentiation protein GL1">
    <location>
        <begin position="1"/>
        <end position="223"/>
    </location>
</feature>
<feature type="domain" description="HTH myb-type 1" evidence="2">
    <location>
        <begin position="11"/>
        <end position="63"/>
    </location>
</feature>
<feature type="domain" description="HTH myb-type 2" evidence="2">
    <location>
        <begin position="64"/>
        <end position="118"/>
    </location>
</feature>
<feature type="DNA-binding region" description="H-T-H motif" evidence="2">
    <location>
        <begin position="39"/>
        <end position="63"/>
    </location>
</feature>
<feature type="DNA-binding region" description="H-T-H motif" evidence="2">
    <location>
        <begin position="91"/>
        <end position="114"/>
    </location>
</feature>
<feature type="sequence variant" description="In strain: cv. Karhumaeki.">
    <original>AKRVPGRTDN</original>
    <variation>NSQKSTGKNR</variation>
    <location>
        <begin position="95"/>
        <end position="104"/>
    </location>
</feature>
<feature type="sequence variant" description="In strain: cv. Karhumaeki.">
    <location>
        <begin position="105"/>
        <end position="223"/>
    </location>
</feature>
<name>GL1_ARALY</name>
<evidence type="ECO:0000250" key="1"/>
<evidence type="ECO:0000255" key="2">
    <source>
        <dbReference type="PROSITE-ProRule" id="PRU00625"/>
    </source>
</evidence>
<sequence length="223" mass="26113">MRIRRREEKENQEYKKGLWTVEEDNILMDYVLNHGTGQWNRIVRKTGLKRCGKSCRLRWMNYLSPNVNKGNFTEQEEDLIIRLHKLLGNRWSLIAKRVPGRTDNQVKNYWNTHLSKKLVGDYSSAVKTTGEDDDSLPSLFITAATTSCHHQQENVYENIAKRFDGVVSASYEDKPKQELAQNDVLMATTNDPSHYYGNNALWVHDDDFELSSLFTRNDEFCFW</sequence>
<dbReference type="EMBL" id="AF263720">
    <property type="protein sequence ID" value="AAL01245.1"/>
    <property type="molecule type" value="Genomic_DNA"/>
</dbReference>
<dbReference type="EMBL" id="AF263721">
    <property type="protein sequence ID" value="AAL01246.1"/>
    <property type="molecule type" value="Genomic_DNA"/>
</dbReference>
<dbReference type="SMR" id="Q947R4"/>
<dbReference type="GO" id="GO:0005634">
    <property type="term" value="C:nucleus"/>
    <property type="evidence" value="ECO:0007669"/>
    <property type="project" value="UniProtKB-SubCell"/>
</dbReference>
<dbReference type="GO" id="GO:0003677">
    <property type="term" value="F:DNA binding"/>
    <property type="evidence" value="ECO:0007669"/>
    <property type="project" value="UniProtKB-KW"/>
</dbReference>
<dbReference type="CDD" id="cd00167">
    <property type="entry name" value="SANT"/>
    <property type="match status" value="2"/>
</dbReference>
<dbReference type="FunFam" id="1.10.10.60:FF:000001">
    <property type="entry name" value="MYB-related transcription factor"/>
    <property type="match status" value="1"/>
</dbReference>
<dbReference type="FunFam" id="1.10.10.60:FF:000353">
    <property type="entry name" value="Transcription factor WER"/>
    <property type="match status" value="1"/>
</dbReference>
<dbReference type="Gene3D" id="1.10.10.60">
    <property type="entry name" value="Homeodomain-like"/>
    <property type="match status" value="2"/>
</dbReference>
<dbReference type="InterPro" id="IPR009057">
    <property type="entry name" value="Homeodomain-like_sf"/>
</dbReference>
<dbReference type="InterPro" id="IPR017930">
    <property type="entry name" value="Myb_dom"/>
</dbReference>
<dbReference type="InterPro" id="IPR015495">
    <property type="entry name" value="Myb_TF_plants"/>
</dbReference>
<dbReference type="InterPro" id="IPR001005">
    <property type="entry name" value="SANT/Myb"/>
</dbReference>
<dbReference type="PANTHER" id="PTHR47999">
    <property type="entry name" value="TRANSCRIPTION FACTOR MYB8-RELATED-RELATED"/>
    <property type="match status" value="1"/>
</dbReference>
<dbReference type="PANTHER" id="PTHR47999:SF59">
    <property type="entry name" value="TRANSCRIPTION FACTOR WER-LIKE"/>
    <property type="match status" value="1"/>
</dbReference>
<dbReference type="Pfam" id="PF00249">
    <property type="entry name" value="Myb_DNA-binding"/>
    <property type="match status" value="2"/>
</dbReference>
<dbReference type="SMART" id="SM00717">
    <property type="entry name" value="SANT"/>
    <property type="match status" value="2"/>
</dbReference>
<dbReference type="SUPFAM" id="SSF46689">
    <property type="entry name" value="Homeodomain-like"/>
    <property type="match status" value="1"/>
</dbReference>
<dbReference type="PROSITE" id="PS51294">
    <property type="entry name" value="HTH_MYB"/>
    <property type="match status" value="2"/>
</dbReference>
<reference key="1">
    <citation type="journal article" date="2001" name="Mol. Biol. Evol.">
        <title>Trichome distribution in Arabidopsis thaliana and its close relative Arabidopsis lyrata: molecular analysis of the candidate gene GLABROUS1.</title>
        <authorList>
            <person name="Hauser M.-T."/>
            <person name="Harr B."/>
            <person name="Schloetterer C."/>
        </authorList>
    </citation>
    <scope>NUCLEOTIDE SEQUENCE [GENOMIC DNA]</scope>
    <scope>VARIANTS</scope>
    <source>
        <strain>cv. Karhumaeki</strain>
        <strain>cv. Plech</strain>
    </source>
</reference>
<organism>
    <name type="scientific">Arabidopsis lyrata</name>
    <name type="common">Lyre-leaved rock-cress</name>
    <name type="synonym">Arabis lyrata</name>
    <dbReference type="NCBI Taxonomy" id="59689"/>
    <lineage>
        <taxon>Eukaryota</taxon>
        <taxon>Viridiplantae</taxon>
        <taxon>Streptophyta</taxon>
        <taxon>Embryophyta</taxon>
        <taxon>Tracheophyta</taxon>
        <taxon>Spermatophyta</taxon>
        <taxon>Magnoliopsida</taxon>
        <taxon>eudicotyledons</taxon>
        <taxon>Gunneridae</taxon>
        <taxon>Pentapetalae</taxon>
        <taxon>rosids</taxon>
        <taxon>malvids</taxon>
        <taxon>Brassicales</taxon>
        <taxon>Brassicaceae</taxon>
        <taxon>Camelineae</taxon>
        <taxon>Arabidopsis</taxon>
    </lineage>
</organism>
<keyword id="KW-0238">DNA-binding</keyword>
<keyword id="KW-0539">Nucleus</keyword>
<keyword id="KW-0677">Repeat</keyword>
<keyword id="KW-0804">Transcription</keyword>
<keyword id="KW-0805">Transcription regulation</keyword>
<accession>Q947R4</accession>
<accession>Q947R5</accession>
<protein>
    <recommendedName>
        <fullName>Trichome differentiation protein GL1</fullName>
    </recommendedName>
    <alternativeName>
        <fullName>Protein GLABROUS 1</fullName>
    </alternativeName>
</protein>